<comment type="similarity">
    <text evidence="1">Belongs to the UPF0246 family.</text>
</comment>
<sequence length="260" mass="29228">MLAIISPAKTLDFETPAPNFPFANSQPKLTAYSQQLIDICKQFSPAELGSLMSISDKLASLNVARFAEWQLAHNEQNAKAALFAFKGDVYTGLDAETLTQAQVEYAQVHLRMLSGLYGLLKPLDLMQPYRLEMGTKLVNPKGKDLYAFWGDIITQHLQTAMDEQGDNILVNLASDEYYGAVKPQKLQATIIKPVFLDEKNGKFKQISFYAKKARGMMVRFILETQPTSVEQLKAFNYGSYWFDEDASGATELVFKREEQA</sequence>
<gene>
    <name type="ordered locus">APJL_0596</name>
</gene>
<reference key="1">
    <citation type="journal article" date="2008" name="PLoS ONE">
        <title>Genome biology of Actinobacillus pleuropneumoniae JL03, an isolate of serotype 3 prevalent in China.</title>
        <authorList>
            <person name="Xu Z."/>
            <person name="Zhou Y."/>
            <person name="Li L."/>
            <person name="Zhou R."/>
            <person name="Xiao S."/>
            <person name="Wan Y."/>
            <person name="Zhang S."/>
            <person name="Wang K."/>
            <person name="Li W."/>
            <person name="Li L."/>
            <person name="Jin H."/>
            <person name="Kang M."/>
            <person name="Dalai B."/>
            <person name="Li T."/>
            <person name="Liu L."/>
            <person name="Cheng Y."/>
            <person name="Zhang L."/>
            <person name="Xu T."/>
            <person name="Zheng H."/>
            <person name="Pu S."/>
            <person name="Wang B."/>
            <person name="Gu W."/>
            <person name="Zhang X.L."/>
            <person name="Zhu G.-F."/>
            <person name="Wang S."/>
            <person name="Zhao G.-P."/>
            <person name="Chen H."/>
        </authorList>
    </citation>
    <scope>NUCLEOTIDE SEQUENCE [LARGE SCALE GENOMIC DNA]</scope>
    <source>
        <strain>JL03</strain>
    </source>
</reference>
<proteinExistence type="inferred from homology"/>
<name>Y596_ACTPJ</name>
<accession>B0BUG1</accession>
<feature type="chain" id="PRO_1000131097" description="UPF0246 protein APJL_0596">
    <location>
        <begin position="1"/>
        <end position="260"/>
    </location>
</feature>
<dbReference type="EMBL" id="CP000687">
    <property type="protein sequence ID" value="ABY69166.1"/>
    <property type="molecule type" value="Genomic_DNA"/>
</dbReference>
<dbReference type="RefSeq" id="WP_012262876.1">
    <property type="nucleotide sequence ID" value="NC_010278.1"/>
</dbReference>
<dbReference type="SMR" id="B0BUG1"/>
<dbReference type="KEGG" id="apj:APJL_0596"/>
<dbReference type="HOGENOM" id="CLU_061989_0_0_6"/>
<dbReference type="Proteomes" id="UP000008547">
    <property type="component" value="Chromosome"/>
</dbReference>
<dbReference type="GO" id="GO:0005829">
    <property type="term" value="C:cytosol"/>
    <property type="evidence" value="ECO:0007669"/>
    <property type="project" value="TreeGrafter"/>
</dbReference>
<dbReference type="GO" id="GO:0033194">
    <property type="term" value="P:response to hydroperoxide"/>
    <property type="evidence" value="ECO:0007669"/>
    <property type="project" value="TreeGrafter"/>
</dbReference>
<dbReference type="HAMAP" id="MF_00652">
    <property type="entry name" value="UPF0246"/>
    <property type="match status" value="1"/>
</dbReference>
<dbReference type="InterPro" id="IPR005583">
    <property type="entry name" value="YaaA"/>
</dbReference>
<dbReference type="NCBIfam" id="NF002541">
    <property type="entry name" value="PRK02101.1-1"/>
    <property type="match status" value="1"/>
</dbReference>
<dbReference type="NCBIfam" id="NF002542">
    <property type="entry name" value="PRK02101.1-3"/>
    <property type="match status" value="1"/>
</dbReference>
<dbReference type="PANTHER" id="PTHR30283:SF4">
    <property type="entry name" value="PEROXIDE STRESS RESISTANCE PROTEIN YAAA"/>
    <property type="match status" value="1"/>
</dbReference>
<dbReference type="PANTHER" id="PTHR30283">
    <property type="entry name" value="PEROXIDE STRESS RESPONSE PROTEIN YAAA"/>
    <property type="match status" value="1"/>
</dbReference>
<dbReference type="Pfam" id="PF03883">
    <property type="entry name" value="H2O2_YaaD"/>
    <property type="match status" value="1"/>
</dbReference>
<protein>
    <recommendedName>
        <fullName evidence="1">UPF0246 protein APJL_0596</fullName>
    </recommendedName>
</protein>
<organism>
    <name type="scientific">Actinobacillus pleuropneumoniae serotype 3 (strain JL03)</name>
    <dbReference type="NCBI Taxonomy" id="434271"/>
    <lineage>
        <taxon>Bacteria</taxon>
        <taxon>Pseudomonadati</taxon>
        <taxon>Pseudomonadota</taxon>
        <taxon>Gammaproteobacteria</taxon>
        <taxon>Pasteurellales</taxon>
        <taxon>Pasteurellaceae</taxon>
        <taxon>Actinobacillus</taxon>
    </lineage>
</organism>
<evidence type="ECO:0000255" key="1">
    <source>
        <dbReference type="HAMAP-Rule" id="MF_00652"/>
    </source>
</evidence>